<accession>P68721</accession>
<reference key="1">
    <citation type="journal article" date="1999" name="J. Mol. Evol.">
        <title>Dynamic diversification from a putative common ancestor of scorpion toxins affecting sodium, potassium, and chloride channels.</title>
        <authorList>
            <person name="Froy O."/>
            <person name="Sagiv T."/>
            <person name="Poreh M."/>
            <person name="Urbach D."/>
            <person name="Zilberberg N."/>
            <person name="Gurevitz M."/>
        </authorList>
    </citation>
    <scope>NUCLEOTIDE SEQUENCE [GENOMIC DNA]</scope>
</reference>
<keyword id="KW-1015">Disulfide bond</keyword>
<keyword id="KW-0872">Ion channel impairing toxin</keyword>
<keyword id="KW-0528">Neurotoxin</keyword>
<keyword id="KW-0964">Secreted</keyword>
<keyword id="KW-0732">Signal</keyword>
<keyword id="KW-0800">Toxin</keyword>
<keyword id="KW-0738">Voltage-gated sodium channel impairing toxin</keyword>
<name>SIX1A_LEIHE</name>
<sequence length="88" mass="9901">MKFFLLFLVVLPIMGVLGKKNGYAVDSKGKAPECFLSNYCNNECTKVHYADKGYCCLLSCYCFGLNDDKKVLEISGTTKKYCDFTIIN</sequence>
<feature type="signal peptide" evidence="3">
    <location>
        <begin position="1"/>
        <end position="18"/>
    </location>
</feature>
<feature type="chain" id="PRO_0000035189" description="Beta-insect excitatory toxin LqhIT1a" evidence="6">
    <location>
        <begin position="19"/>
        <end position="88"/>
    </location>
</feature>
<feature type="domain" description="LCN-type CS-alpha/beta" evidence="4">
    <location>
        <begin position="20"/>
        <end position="83"/>
    </location>
</feature>
<feature type="disulfide bond" evidence="2">
    <location>
        <begin position="34"/>
        <end position="55"/>
    </location>
</feature>
<feature type="disulfide bond" evidence="2">
    <location>
        <begin position="40"/>
        <end position="60"/>
    </location>
</feature>
<feature type="disulfide bond" evidence="2">
    <location>
        <begin position="44"/>
        <end position="62"/>
    </location>
</feature>
<feature type="disulfide bond" evidence="2">
    <location>
        <begin position="56"/>
        <end position="82"/>
    </location>
</feature>
<comment type="function">
    <text evidence="1">Excitatory insect toxins induce a spastic paralysis. They bind voltage-independently at site-4 of sodium channels (Nav) and shift the voltage of activation toward more negative potentials thereby affecting sodium channel activation and promoting spontaneous and repetitive firing (By similarity).</text>
</comment>
<comment type="subcellular location">
    <subcellularLocation>
        <location evidence="5">Secreted</location>
    </subcellularLocation>
</comment>
<comment type="tissue specificity">
    <text evidence="5">Expressed by the venom gland.</text>
</comment>
<comment type="domain">
    <text evidence="5">Has the structural arrangement of an alpha-helix connected to antiparallel beta-sheets by disulfide bonds (CS-alpha/beta).</text>
</comment>
<comment type="similarity">
    <text evidence="5">Belongs to the long (4 C-C) scorpion toxin superfamily. Sodium channel inhibitor family. Beta subfamily.</text>
</comment>
<organism>
    <name type="scientific">Leiurus hebraeus</name>
    <name type="common">Hebrew deathstalker scorpion</name>
    <name type="synonym">Leiurus quinquestriatus hebraeus</name>
    <dbReference type="NCBI Taxonomy" id="2899558"/>
    <lineage>
        <taxon>Eukaryota</taxon>
        <taxon>Metazoa</taxon>
        <taxon>Ecdysozoa</taxon>
        <taxon>Arthropoda</taxon>
        <taxon>Chelicerata</taxon>
        <taxon>Arachnida</taxon>
        <taxon>Scorpiones</taxon>
        <taxon>Buthida</taxon>
        <taxon>Buthoidea</taxon>
        <taxon>Buthidae</taxon>
        <taxon>Leiurus</taxon>
    </lineage>
</organism>
<dbReference type="SMR" id="P68721"/>
<dbReference type="GO" id="GO:0005576">
    <property type="term" value="C:extracellular region"/>
    <property type="evidence" value="ECO:0007669"/>
    <property type="project" value="UniProtKB-SubCell"/>
</dbReference>
<dbReference type="GO" id="GO:0019871">
    <property type="term" value="F:sodium channel inhibitor activity"/>
    <property type="evidence" value="ECO:0007669"/>
    <property type="project" value="InterPro"/>
</dbReference>
<dbReference type="GO" id="GO:0090729">
    <property type="term" value="F:toxin activity"/>
    <property type="evidence" value="ECO:0007669"/>
    <property type="project" value="UniProtKB-KW"/>
</dbReference>
<dbReference type="GO" id="GO:0006952">
    <property type="term" value="P:defense response"/>
    <property type="evidence" value="ECO:0007669"/>
    <property type="project" value="InterPro"/>
</dbReference>
<dbReference type="CDD" id="cd23106">
    <property type="entry name" value="neurotoxins_LC_scorpion"/>
    <property type="match status" value="1"/>
</dbReference>
<dbReference type="Gene3D" id="3.30.30.10">
    <property type="entry name" value="Knottin, scorpion toxin-like"/>
    <property type="match status" value="1"/>
</dbReference>
<dbReference type="InterPro" id="IPR044062">
    <property type="entry name" value="LCN-type_CS_alpha_beta_dom"/>
</dbReference>
<dbReference type="InterPro" id="IPR003614">
    <property type="entry name" value="Scorpion_toxin-like"/>
</dbReference>
<dbReference type="InterPro" id="IPR036574">
    <property type="entry name" value="Scorpion_toxin-like_sf"/>
</dbReference>
<dbReference type="InterPro" id="IPR002061">
    <property type="entry name" value="Scorpion_toxinL/defensin"/>
</dbReference>
<dbReference type="Pfam" id="PF00537">
    <property type="entry name" value="Toxin_3"/>
    <property type="match status" value="1"/>
</dbReference>
<dbReference type="SMART" id="SM00505">
    <property type="entry name" value="Knot1"/>
    <property type="match status" value="1"/>
</dbReference>
<dbReference type="SUPFAM" id="SSF57095">
    <property type="entry name" value="Scorpion toxin-like"/>
    <property type="match status" value="1"/>
</dbReference>
<dbReference type="PROSITE" id="PS51863">
    <property type="entry name" value="LCN_CSAB"/>
    <property type="match status" value="1"/>
</dbReference>
<evidence type="ECO:0000250" key="1"/>
<evidence type="ECO:0000250" key="2">
    <source>
        <dbReference type="UniProtKB" id="P56637"/>
    </source>
</evidence>
<evidence type="ECO:0000255" key="3"/>
<evidence type="ECO:0000255" key="4">
    <source>
        <dbReference type="PROSITE-ProRule" id="PRU01210"/>
    </source>
</evidence>
<evidence type="ECO:0000305" key="5"/>
<evidence type="ECO:0000305" key="6">
    <source>
    </source>
</evidence>
<proteinExistence type="inferred from homology"/>
<protein>
    <recommendedName>
        <fullName>Beta-insect excitatory toxin LqhIT1a</fullName>
    </recommendedName>
    <alternativeName>
        <fullName>Insect neurotoxin 1a</fullName>
    </alternativeName>
    <alternativeName>
        <fullName>Lqh IT1-a</fullName>
        <shortName>LqhIT1-a</shortName>
    </alternativeName>
    <alternativeName>
        <fullName>Lqh-xtrITa</fullName>
    </alternativeName>
</protein>